<name>HRCA_TRIV2</name>
<keyword id="KW-0678">Repressor</keyword>
<keyword id="KW-0346">Stress response</keyword>
<keyword id="KW-0804">Transcription</keyword>
<keyword id="KW-0805">Transcription regulation</keyword>
<gene>
    <name evidence="1" type="primary">hrcA</name>
    <name type="ordered locus">Ava_1661</name>
</gene>
<comment type="function">
    <text evidence="1">Negative regulator of class I heat shock genes (grpE-dnaK-dnaJ and groELS operons). Prevents heat-shock induction of these operons.</text>
</comment>
<comment type="similarity">
    <text evidence="1">Belongs to the HrcA family.</text>
</comment>
<dbReference type="EMBL" id="CP000117">
    <property type="protein sequence ID" value="ABA21284.1"/>
    <property type="molecule type" value="Genomic_DNA"/>
</dbReference>
<dbReference type="SMR" id="Q3MCK2"/>
<dbReference type="STRING" id="240292.Ava_1661"/>
<dbReference type="KEGG" id="ava:Ava_1661"/>
<dbReference type="eggNOG" id="COG1420">
    <property type="taxonomic scope" value="Bacteria"/>
</dbReference>
<dbReference type="HOGENOM" id="CLU_050019_1_0_3"/>
<dbReference type="Proteomes" id="UP000002533">
    <property type="component" value="Chromosome"/>
</dbReference>
<dbReference type="GO" id="GO:0003677">
    <property type="term" value="F:DNA binding"/>
    <property type="evidence" value="ECO:0007669"/>
    <property type="project" value="InterPro"/>
</dbReference>
<dbReference type="GO" id="GO:0045892">
    <property type="term" value="P:negative regulation of DNA-templated transcription"/>
    <property type="evidence" value="ECO:0007669"/>
    <property type="project" value="UniProtKB-UniRule"/>
</dbReference>
<dbReference type="Gene3D" id="3.30.450.40">
    <property type="match status" value="1"/>
</dbReference>
<dbReference type="Gene3D" id="3.30.390.60">
    <property type="entry name" value="Heat-inducible transcription repressor hrca homolog, domain 3"/>
    <property type="match status" value="1"/>
</dbReference>
<dbReference type="Gene3D" id="1.10.10.10">
    <property type="entry name" value="Winged helix-like DNA-binding domain superfamily/Winged helix DNA-binding domain"/>
    <property type="match status" value="1"/>
</dbReference>
<dbReference type="HAMAP" id="MF_00081">
    <property type="entry name" value="HrcA"/>
    <property type="match status" value="1"/>
</dbReference>
<dbReference type="InterPro" id="IPR029016">
    <property type="entry name" value="GAF-like_dom_sf"/>
</dbReference>
<dbReference type="InterPro" id="IPR002571">
    <property type="entry name" value="HrcA"/>
</dbReference>
<dbReference type="InterPro" id="IPR021153">
    <property type="entry name" value="HrcA_C"/>
</dbReference>
<dbReference type="InterPro" id="IPR036388">
    <property type="entry name" value="WH-like_DNA-bd_sf"/>
</dbReference>
<dbReference type="InterPro" id="IPR036390">
    <property type="entry name" value="WH_DNA-bd_sf"/>
</dbReference>
<dbReference type="InterPro" id="IPR023120">
    <property type="entry name" value="WHTH_transcript_rep_HrcA_IDD"/>
</dbReference>
<dbReference type="NCBIfam" id="TIGR00331">
    <property type="entry name" value="hrcA"/>
    <property type="match status" value="1"/>
</dbReference>
<dbReference type="PANTHER" id="PTHR34824">
    <property type="entry name" value="HEAT-INDUCIBLE TRANSCRIPTION REPRESSOR HRCA"/>
    <property type="match status" value="1"/>
</dbReference>
<dbReference type="PANTHER" id="PTHR34824:SF1">
    <property type="entry name" value="HEAT-INDUCIBLE TRANSCRIPTION REPRESSOR HRCA"/>
    <property type="match status" value="1"/>
</dbReference>
<dbReference type="Pfam" id="PF01628">
    <property type="entry name" value="HrcA"/>
    <property type="match status" value="1"/>
</dbReference>
<dbReference type="PIRSF" id="PIRSF005485">
    <property type="entry name" value="HrcA"/>
    <property type="match status" value="1"/>
</dbReference>
<dbReference type="SUPFAM" id="SSF55781">
    <property type="entry name" value="GAF domain-like"/>
    <property type="match status" value="1"/>
</dbReference>
<dbReference type="SUPFAM" id="SSF46785">
    <property type="entry name" value="Winged helix' DNA-binding domain"/>
    <property type="match status" value="1"/>
</dbReference>
<evidence type="ECO:0000255" key="1">
    <source>
        <dbReference type="HAMAP-Rule" id="MF_00081"/>
    </source>
</evidence>
<reference key="1">
    <citation type="journal article" date="2014" name="Stand. Genomic Sci.">
        <title>Complete genome sequence of Anabaena variabilis ATCC 29413.</title>
        <authorList>
            <person name="Thiel T."/>
            <person name="Pratte B.S."/>
            <person name="Zhong J."/>
            <person name="Goodwin L."/>
            <person name="Copeland A."/>
            <person name="Lucas S."/>
            <person name="Han C."/>
            <person name="Pitluck S."/>
            <person name="Land M.L."/>
            <person name="Kyrpides N.C."/>
            <person name="Woyke T."/>
        </authorList>
    </citation>
    <scope>NUCLEOTIDE SEQUENCE [LARGE SCALE GENOMIC DNA]</scope>
    <source>
        <strain>ATCC 29413 / PCC 7937</strain>
    </source>
</reference>
<sequence>MQVQLTNRQQHILWATVRHYIATAEPVGSKALVEEYDLGVSSATIRNVMGVLEKSGLLYQPHTSAGRVPSDSGYRIYVDQLITPSLRDTTRTEVLAKEVESALQQHLQWEDWSLEILLQGAAQILASLSGCISLITMPQTNTASVRHLQLVQIETGRIMLILVTDSYETHSKLMDLPPARSETKPDPEVIDRELQIVSNFLNSHLRGRSLLEISTLDWSQLDREFQSYGEFLKNSVAELAHRSAAPAATQIMVRGLAEVLRQPEFSQLQQVKTIIQLLEEEQEQLWRLIFEEPELEDTHKSKVTVRIGAENPLEPIRTCSLISSTYRRGGVPLGSVGVLGPTRLDYESAIAVVAAAADYLSEAFS</sequence>
<protein>
    <recommendedName>
        <fullName evidence="1">Heat-inducible transcription repressor HrcA</fullName>
    </recommendedName>
</protein>
<organism>
    <name type="scientific">Trichormus variabilis (strain ATCC 29413 / PCC 7937)</name>
    <name type="common">Anabaena variabilis</name>
    <dbReference type="NCBI Taxonomy" id="240292"/>
    <lineage>
        <taxon>Bacteria</taxon>
        <taxon>Bacillati</taxon>
        <taxon>Cyanobacteriota</taxon>
        <taxon>Cyanophyceae</taxon>
        <taxon>Nostocales</taxon>
        <taxon>Nostocaceae</taxon>
        <taxon>Trichormus</taxon>
    </lineage>
</organism>
<feature type="chain" id="PRO_1000010373" description="Heat-inducible transcription repressor HrcA">
    <location>
        <begin position="1"/>
        <end position="365"/>
    </location>
</feature>
<proteinExistence type="inferred from homology"/>
<accession>Q3MCK2</accession>